<organism>
    <name type="scientific">Bacillus cytotoxicus (strain DSM 22905 / CIP 110041 / 391-98 / NVH 391-98)</name>
    <dbReference type="NCBI Taxonomy" id="315749"/>
    <lineage>
        <taxon>Bacteria</taxon>
        <taxon>Bacillati</taxon>
        <taxon>Bacillota</taxon>
        <taxon>Bacilli</taxon>
        <taxon>Bacillales</taxon>
        <taxon>Bacillaceae</taxon>
        <taxon>Bacillus</taxon>
        <taxon>Bacillus cereus group</taxon>
    </lineage>
</organism>
<evidence type="ECO:0000255" key="1">
    <source>
        <dbReference type="HAMAP-Rule" id="MF_00168"/>
    </source>
</evidence>
<keyword id="KW-0328">Glycosyltransferase</keyword>
<keyword id="KW-0479">Metal-binding</keyword>
<keyword id="KW-0671">Queuosine biosynthesis</keyword>
<keyword id="KW-0808">Transferase</keyword>
<keyword id="KW-0819">tRNA processing</keyword>
<keyword id="KW-0862">Zinc</keyword>
<reference key="1">
    <citation type="journal article" date="2008" name="Chem. Biol. Interact.">
        <title>Extending the Bacillus cereus group genomics to putative food-borne pathogens of different toxicity.</title>
        <authorList>
            <person name="Lapidus A."/>
            <person name="Goltsman E."/>
            <person name="Auger S."/>
            <person name="Galleron N."/>
            <person name="Segurens B."/>
            <person name="Dossat C."/>
            <person name="Land M.L."/>
            <person name="Broussolle V."/>
            <person name="Brillard J."/>
            <person name="Guinebretiere M.-H."/>
            <person name="Sanchis V."/>
            <person name="Nguen-the C."/>
            <person name="Lereclus D."/>
            <person name="Richardson P."/>
            <person name="Wincker P."/>
            <person name="Weissenbach J."/>
            <person name="Ehrlich S.D."/>
            <person name="Sorokin A."/>
        </authorList>
    </citation>
    <scope>NUCLEOTIDE SEQUENCE [LARGE SCALE GENOMIC DNA]</scope>
    <source>
        <strain>DSM 22905 / CIP 110041 / 391-98 / NVH 391-98</strain>
    </source>
</reference>
<gene>
    <name evidence="1" type="primary">tgt</name>
    <name type="ordered locus">Bcer98_3134</name>
</gene>
<protein>
    <recommendedName>
        <fullName evidence="1">Queuine tRNA-ribosyltransferase</fullName>
        <ecNumber evidence="1">2.4.2.29</ecNumber>
    </recommendedName>
    <alternativeName>
        <fullName evidence="1">Guanine insertion enzyme</fullName>
    </alternativeName>
    <alternativeName>
        <fullName evidence="1">tRNA-guanine transglycosylase</fullName>
    </alternativeName>
</protein>
<proteinExistence type="inferred from homology"/>
<dbReference type="EC" id="2.4.2.29" evidence="1"/>
<dbReference type="EMBL" id="CP000764">
    <property type="protein sequence ID" value="ABS23357.1"/>
    <property type="molecule type" value="Genomic_DNA"/>
</dbReference>
<dbReference type="RefSeq" id="WP_012095594.1">
    <property type="nucleotide sequence ID" value="NC_009674.1"/>
</dbReference>
<dbReference type="SMR" id="A7GT99"/>
<dbReference type="STRING" id="315749.Bcer98_3134"/>
<dbReference type="GeneID" id="33898382"/>
<dbReference type="KEGG" id="bcy:Bcer98_3134"/>
<dbReference type="eggNOG" id="COG0343">
    <property type="taxonomic scope" value="Bacteria"/>
</dbReference>
<dbReference type="HOGENOM" id="CLU_022060_0_1_9"/>
<dbReference type="OrthoDB" id="9805417at2"/>
<dbReference type="UniPathway" id="UPA00392"/>
<dbReference type="Proteomes" id="UP000002300">
    <property type="component" value="Chromosome"/>
</dbReference>
<dbReference type="GO" id="GO:0005829">
    <property type="term" value="C:cytosol"/>
    <property type="evidence" value="ECO:0007669"/>
    <property type="project" value="TreeGrafter"/>
</dbReference>
<dbReference type="GO" id="GO:0046872">
    <property type="term" value="F:metal ion binding"/>
    <property type="evidence" value="ECO:0007669"/>
    <property type="project" value="UniProtKB-KW"/>
</dbReference>
<dbReference type="GO" id="GO:0008479">
    <property type="term" value="F:tRNA-guanosine(34) queuine transglycosylase activity"/>
    <property type="evidence" value="ECO:0007669"/>
    <property type="project" value="UniProtKB-UniRule"/>
</dbReference>
<dbReference type="GO" id="GO:0008616">
    <property type="term" value="P:queuosine biosynthetic process"/>
    <property type="evidence" value="ECO:0007669"/>
    <property type="project" value="UniProtKB-UniRule"/>
</dbReference>
<dbReference type="GO" id="GO:0002099">
    <property type="term" value="P:tRNA wobble guanine modification"/>
    <property type="evidence" value="ECO:0007669"/>
    <property type="project" value="TreeGrafter"/>
</dbReference>
<dbReference type="GO" id="GO:0101030">
    <property type="term" value="P:tRNA-guanine transglycosylation"/>
    <property type="evidence" value="ECO:0007669"/>
    <property type="project" value="InterPro"/>
</dbReference>
<dbReference type="FunFam" id="3.20.20.105:FF:000001">
    <property type="entry name" value="Queuine tRNA-ribosyltransferase"/>
    <property type="match status" value="1"/>
</dbReference>
<dbReference type="Gene3D" id="3.20.20.105">
    <property type="entry name" value="Queuine tRNA-ribosyltransferase-like"/>
    <property type="match status" value="1"/>
</dbReference>
<dbReference type="HAMAP" id="MF_00168">
    <property type="entry name" value="Q_tRNA_Tgt"/>
    <property type="match status" value="1"/>
</dbReference>
<dbReference type="InterPro" id="IPR050076">
    <property type="entry name" value="ArchSynthase1/Queuine_TRR"/>
</dbReference>
<dbReference type="InterPro" id="IPR004803">
    <property type="entry name" value="TGT"/>
</dbReference>
<dbReference type="InterPro" id="IPR036511">
    <property type="entry name" value="TGT-like_sf"/>
</dbReference>
<dbReference type="InterPro" id="IPR002616">
    <property type="entry name" value="tRNA_ribo_trans-like"/>
</dbReference>
<dbReference type="NCBIfam" id="TIGR00430">
    <property type="entry name" value="Q_tRNA_tgt"/>
    <property type="match status" value="1"/>
</dbReference>
<dbReference type="NCBIfam" id="TIGR00449">
    <property type="entry name" value="tgt_general"/>
    <property type="match status" value="1"/>
</dbReference>
<dbReference type="PANTHER" id="PTHR46499">
    <property type="entry name" value="QUEUINE TRNA-RIBOSYLTRANSFERASE"/>
    <property type="match status" value="1"/>
</dbReference>
<dbReference type="PANTHER" id="PTHR46499:SF1">
    <property type="entry name" value="QUEUINE TRNA-RIBOSYLTRANSFERASE"/>
    <property type="match status" value="1"/>
</dbReference>
<dbReference type="Pfam" id="PF01702">
    <property type="entry name" value="TGT"/>
    <property type="match status" value="1"/>
</dbReference>
<dbReference type="SUPFAM" id="SSF51713">
    <property type="entry name" value="tRNA-guanine transglycosylase"/>
    <property type="match status" value="1"/>
</dbReference>
<feature type="chain" id="PRO_1000077000" description="Queuine tRNA-ribosyltransferase">
    <location>
        <begin position="1"/>
        <end position="379"/>
    </location>
</feature>
<feature type="region of interest" description="RNA binding" evidence="1">
    <location>
        <begin position="249"/>
        <end position="255"/>
    </location>
</feature>
<feature type="region of interest" description="RNA binding; important for wobble base 34 recognition" evidence="1">
    <location>
        <begin position="273"/>
        <end position="277"/>
    </location>
</feature>
<feature type="active site" description="Proton acceptor" evidence="1">
    <location>
        <position position="94"/>
    </location>
</feature>
<feature type="active site" description="Nucleophile" evidence="1">
    <location>
        <position position="268"/>
    </location>
</feature>
<feature type="binding site" evidence="1">
    <location>
        <begin position="94"/>
        <end position="98"/>
    </location>
    <ligand>
        <name>substrate</name>
    </ligand>
</feature>
<feature type="binding site" evidence="1">
    <location>
        <position position="148"/>
    </location>
    <ligand>
        <name>substrate</name>
    </ligand>
</feature>
<feature type="binding site" evidence="1">
    <location>
        <position position="191"/>
    </location>
    <ligand>
        <name>substrate</name>
    </ligand>
</feature>
<feature type="binding site" evidence="1">
    <location>
        <position position="218"/>
    </location>
    <ligand>
        <name>substrate</name>
    </ligand>
</feature>
<feature type="binding site" evidence="1">
    <location>
        <position position="306"/>
    </location>
    <ligand>
        <name>Zn(2+)</name>
        <dbReference type="ChEBI" id="CHEBI:29105"/>
    </ligand>
</feature>
<feature type="binding site" evidence="1">
    <location>
        <position position="308"/>
    </location>
    <ligand>
        <name>Zn(2+)</name>
        <dbReference type="ChEBI" id="CHEBI:29105"/>
    </ligand>
</feature>
<feature type="binding site" evidence="1">
    <location>
        <position position="311"/>
    </location>
    <ligand>
        <name>Zn(2+)</name>
        <dbReference type="ChEBI" id="CHEBI:29105"/>
    </ligand>
</feature>
<feature type="binding site" evidence="1">
    <location>
        <position position="337"/>
    </location>
    <ligand>
        <name>Zn(2+)</name>
        <dbReference type="ChEBI" id="CHEBI:29105"/>
    </ligand>
</feature>
<sequence length="379" mass="43266">MTAIRYEFIKKCKQTGARLGRVHTPHGSFDTPTFMPVGTLATVKTMSPEELKAMDSGIILSNTYHLWLRPGHEIVREAGGLHKFMNWDRAILTDSGGFQVFSLSDFRRIEEEGVYFRNHLNGDKLFLSPEKAMEIQNALGSDIMMAFDECPPFPATFEYMKKSVERTSRWAERCLNAHQRPEDQGLFGIVQGGEFEELRRQSAKDLVSMDFPGYAVGGLSVGEPKDIMNRVLEFTTPLLPENKPRYLMGVGSPDSLIDGAIRGIDMFDCVLPTRIARNGTCMTSQGRLVVKNAKFARDFGPLDPNCDCYTCKNYSRAYIRHLMKCDETFGIRLTSYHNLHFLLNLMEQVRQAIREDRLGDFREEFFEQYGFNKPNAKNF</sequence>
<name>TGT_BACCN</name>
<accession>A7GT99</accession>
<comment type="function">
    <text evidence="1">Catalyzes the base-exchange of a guanine (G) residue with the queuine precursor 7-aminomethyl-7-deazaguanine (PreQ1) at position 34 (anticodon wobble position) in tRNAs with GU(N) anticodons (tRNA-Asp, -Asn, -His and -Tyr). Catalysis occurs through a double-displacement mechanism. The nucleophile active site attacks the C1' of nucleotide 34 to detach the guanine base from the RNA, forming a covalent enzyme-RNA intermediate. The proton acceptor active site deprotonates the incoming PreQ1, allowing a nucleophilic attack on the C1' of the ribose to form the product. After dissociation, two additional enzymatic reactions on the tRNA convert PreQ1 to queuine (Q), resulting in the hypermodified nucleoside queuosine (7-(((4,5-cis-dihydroxy-2-cyclopenten-1-yl)amino)methyl)-7-deazaguanosine).</text>
</comment>
<comment type="catalytic activity">
    <reaction evidence="1">
        <text>7-aminomethyl-7-carbaguanine + guanosine(34) in tRNA = 7-aminomethyl-7-carbaguanosine(34) in tRNA + guanine</text>
        <dbReference type="Rhea" id="RHEA:24104"/>
        <dbReference type="Rhea" id="RHEA-COMP:10341"/>
        <dbReference type="Rhea" id="RHEA-COMP:10342"/>
        <dbReference type="ChEBI" id="CHEBI:16235"/>
        <dbReference type="ChEBI" id="CHEBI:58703"/>
        <dbReference type="ChEBI" id="CHEBI:74269"/>
        <dbReference type="ChEBI" id="CHEBI:82833"/>
        <dbReference type="EC" id="2.4.2.29"/>
    </reaction>
</comment>
<comment type="cofactor">
    <cofactor evidence="1">
        <name>Zn(2+)</name>
        <dbReference type="ChEBI" id="CHEBI:29105"/>
    </cofactor>
    <text evidence="1">Binds 1 zinc ion per subunit.</text>
</comment>
<comment type="pathway">
    <text evidence="1">tRNA modification; tRNA-queuosine biosynthesis.</text>
</comment>
<comment type="subunit">
    <text evidence="1">Homodimer. Within each dimer, one monomer is responsible for RNA recognition and catalysis, while the other monomer binds to the replacement base PreQ1.</text>
</comment>
<comment type="similarity">
    <text evidence="1">Belongs to the queuine tRNA-ribosyltransferase family.</text>
</comment>